<evidence type="ECO:0000255" key="1">
    <source>
        <dbReference type="HAMAP-Rule" id="MF_01375"/>
    </source>
</evidence>
<organism>
    <name type="scientific">Klebsiella pneumoniae subsp. pneumoniae (strain ATCC 700721 / MGH 78578)</name>
    <dbReference type="NCBI Taxonomy" id="272620"/>
    <lineage>
        <taxon>Bacteria</taxon>
        <taxon>Pseudomonadati</taxon>
        <taxon>Pseudomonadota</taxon>
        <taxon>Gammaproteobacteria</taxon>
        <taxon>Enterobacterales</taxon>
        <taxon>Enterobacteriaceae</taxon>
        <taxon>Klebsiella/Raoultella group</taxon>
        <taxon>Klebsiella</taxon>
        <taxon>Klebsiella pneumoniae complex</taxon>
    </lineage>
</organism>
<dbReference type="EC" id="3.11.1.1" evidence="1"/>
<dbReference type="EMBL" id="CP000647">
    <property type="protein sequence ID" value="ABR79447.1"/>
    <property type="molecule type" value="Genomic_DNA"/>
</dbReference>
<dbReference type="RefSeq" id="WP_015959164.1">
    <property type="nucleotide sequence ID" value="NC_009648.1"/>
</dbReference>
<dbReference type="SMR" id="A6TFW3"/>
<dbReference type="STRING" id="272620.KPN_04064"/>
<dbReference type="PaxDb" id="272620-KPN_04064"/>
<dbReference type="EnsemblBacteria" id="ABR79447">
    <property type="protein sequence ID" value="ABR79447"/>
    <property type="gene ID" value="KPN_04064"/>
</dbReference>
<dbReference type="KEGG" id="kpn:KPN_04064"/>
<dbReference type="HOGENOM" id="CLU_045011_12_0_6"/>
<dbReference type="Proteomes" id="UP000000265">
    <property type="component" value="Chromosome"/>
</dbReference>
<dbReference type="GO" id="GO:0005829">
    <property type="term" value="C:cytosol"/>
    <property type="evidence" value="ECO:0007669"/>
    <property type="project" value="TreeGrafter"/>
</dbReference>
<dbReference type="GO" id="GO:0000287">
    <property type="term" value="F:magnesium ion binding"/>
    <property type="evidence" value="ECO:0007669"/>
    <property type="project" value="UniProtKB-UniRule"/>
</dbReference>
<dbReference type="GO" id="GO:0008967">
    <property type="term" value="F:phosphoglycolate phosphatase activity"/>
    <property type="evidence" value="ECO:0007669"/>
    <property type="project" value="TreeGrafter"/>
</dbReference>
<dbReference type="GO" id="GO:0050194">
    <property type="term" value="F:phosphonoacetaldehyde hydrolase activity"/>
    <property type="evidence" value="ECO:0007669"/>
    <property type="project" value="UniProtKB-UniRule"/>
</dbReference>
<dbReference type="GO" id="GO:0006281">
    <property type="term" value="P:DNA repair"/>
    <property type="evidence" value="ECO:0007669"/>
    <property type="project" value="TreeGrafter"/>
</dbReference>
<dbReference type="GO" id="GO:0019700">
    <property type="term" value="P:organic phosphonate catabolic process"/>
    <property type="evidence" value="ECO:0007669"/>
    <property type="project" value="InterPro"/>
</dbReference>
<dbReference type="CDD" id="cd02586">
    <property type="entry name" value="HAD_PHN"/>
    <property type="match status" value="1"/>
</dbReference>
<dbReference type="FunFam" id="1.10.150.240:FF:000006">
    <property type="entry name" value="Phosphonoacetaldehyde hydrolase"/>
    <property type="match status" value="1"/>
</dbReference>
<dbReference type="FunFam" id="3.40.50.1000:FF:000072">
    <property type="entry name" value="Phosphonoacetaldehyde hydrolase"/>
    <property type="match status" value="1"/>
</dbReference>
<dbReference type="Gene3D" id="3.40.50.1000">
    <property type="entry name" value="HAD superfamily/HAD-like"/>
    <property type="match status" value="1"/>
</dbReference>
<dbReference type="Gene3D" id="1.10.150.240">
    <property type="entry name" value="Putative phosphatase, domain 2"/>
    <property type="match status" value="1"/>
</dbReference>
<dbReference type="HAMAP" id="MF_01375">
    <property type="entry name" value="PhnX"/>
    <property type="match status" value="1"/>
</dbReference>
<dbReference type="InterPro" id="IPR050155">
    <property type="entry name" value="HAD-like_hydrolase_sf"/>
</dbReference>
<dbReference type="InterPro" id="IPR036412">
    <property type="entry name" value="HAD-like_sf"/>
</dbReference>
<dbReference type="InterPro" id="IPR006439">
    <property type="entry name" value="HAD-SF_hydro_IA"/>
</dbReference>
<dbReference type="InterPro" id="IPR023214">
    <property type="entry name" value="HAD_sf"/>
</dbReference>
<dbReference type="InterPro" id="IPR023198">
    <property type="entry name" value="PGP-like_dom2"/>
</dbReference>
<dbReference type="InterPro" id="IPR006323">
    <property type="entry name" value="Phosphonoacetald_hydro"/>
</dbReference>
<dbReference type="NCBIfam" id="TIGR01509">
    <property type="entry name" value="HAD-SF-IA-v3"/>
    <property type="match status" value="1"/>
</dbReference>
<dbReference type="NCBIfam" id="TIGR01422">
    <property type="entry name" value="phosphonatase"/>
    <property type="match status" value="1"/>
</dbReference>
<dbReference type="PANTHER" id="PTHR43434">
    <property type="entry name" value="PHOSPHOGLYCOLATE PHOSPHATASE"/>
    <property type="match status" value="1"/>
</dbReference>
<dbReference type="PANTHER" id="PTHR43434:SF19">
    <property type="entry name" value="PHOSPHONOACETALDEHYDE HYDROLASE"/>
    <property type="match status" value="1"/>
</dbReference>
<dbReference type="Pfam" id="PF00702">
    <property type="entry name" value="Hydrolase"/>
    <property type="match status" value="1"/>
</dbReference>
<dbReference type="SFLD" id="SFLDG01129">
    <property type="entry name" value="C1.5:_HAD__Beta-PGM__Phosphata"/>
    <property type="match status" value="1"/>
</dbReference>
<dbReference type="SFLD" id="SFLDF00038">
    <property type="entry name" value="phosphonoacetaldehyde_hydrolas"/>
    <property type="match status" value="1"/>
</dbReference>
<dbReference type="SUPFAM" id="SSF56784">
    <property type="entry name" value="HAD-like"/>
    <property type="match status" value="1"/>
</dbReference>
<reference key="1">
    <citation type="submission" date="2006-09" db="EMBL/GenBank/DDBJ databases">
        <authorList>
            <consortium name="The Klebsiella pneumonia Genome Sequencing Project"/>
            <person name="McClelland M."/>
            <person name="Sanderson E.K."/>
            <person name="Spieth J."/>
            <person name="Clifton W.S."/>
            <person name="Latreille P."/>
            <person name="Sabo A."/>
            <person name="Pepin K."/>
            <person name="Bhonagiri V."/>
            <person name="Porwollik S."/>
            <person name="Ali J."/>
            <person name="Wilson R.K."/>
        </authorList>
    </citation>
    <scope>NUCLEOTIDE SEQUENCE [LARGE SCALE GENOMIC DNA]</scope>
    <source>
        <strain>ATCC 700721 / MGH 78578</strain>
    </source>
</reference>
<comment type="function">
    <text evidence="1">Involved in phosphonate degradation.</text>
</comment>
<comment type="catalytic activity">
    <reaction evidence="1">
        <text>phosphonoacetaldehyde + H2O = acetaldehyde + phosphate + H(+)</text>
        <dbReference type="Rhea" id="RHEA:18905"/>
        <dbReference type="ChEBI" id="CHEBI:15343"/>
        <dbReference type="ChEBI" id="CHEBI:15377"/>
        <dbReference type="ChEBI" id="CHEBI:15378"/>
        <dbReference type="ChEBI" id="CHEBI:43474"/>
        <dbReference type="ChEBI" id="CHEBI:58383"/>
        <dbReference type="EC" id="3.11.1.1"/>
    </reaction>
</comment>
<comment type="cofactor">
    <cofactor evidence="1">
        <name>Mg(2+)</name>
        <dbReference type="ChEBI" id="CHEBI:18420"/>
    </cofactor>
    <text evidence="1">Binds 1 Mg(2+) ion per subunit.</text>
</comment>
<comment type="subunit">
    <text evidence="1">Homodimer.</text>
</comment>
<comment type="similarity">
    <text evidence="1">Belongs to the HAD-like hydrolase superfamily. PhnX family.</text>
</comment>
<sequence length="269" mass="28661">MNRISALILDWAGTTVDFGSFAPTQIFVEAFRQAFDIEITLEEARVPMGLGKWQHIEALGKLPAVDSRWQAKFGRAMTAADIDAIYAAFMPLQIAKVVDFSAPIAGVVDTIAALRAKGLKIGSCSGYPRPVMEKLVPAAAAQGYAPDHWVATDDLAAGGRPGPWMALQNVITLGIDDVAHCVKVDDAAPGISEGLHAGMWSVGLAVSGNEFGATWEEYQAMSKAEIATRRERAAGKLYAAGAHYVVDTLADLPEVIADINARLAKGERP</sequence>
<accession>A6TFW3</accession>
<gene>
    <name evidence="1" type="primary">phnX</name>
    <name type="ordered locus">KPN78578_40230</name>
    <name type="ORF">KPN_04064</name>
</gene>
<keyword id="KW-0378">Hydrolase</keyword>
<keyword id="KW-0460">Magnesium</keyword>
<keyword id="KW-0479">Metal-binding</keyword>
<keyword id="KW-0704">Schiff base</keyword>
<protein>
    <recommendedName>
        <fullName evidence="1">Phosphonoacetaldehyde hydrolase</fullName>
        <shortName evidence="1">Phosphonatase</shortName>
        <ecNumber evidence="1">3.11.1.1</ecNumber>
    </recommendedName>
    <alternativeName>
        <fullName evidence="1">Phosphonoacetaldehyde phosphonohydrolase</fullName>
    </alternativeName>
</protein>
<name>PHNX_KLEP7</name>
<proteinExistence type="inferred from homology"/>
<feature type="chain" id="PRO_1000068237" description="Phosphonoacetaldehyde hydrolase">
    <location>
        <begin position="1"/>
        <end position="269"/>
    </location>
</feature>
<feature type="active site" description="Nucleophile" evidence="1">
    <location>
        <position position="10"/>
    </location>
</feature>
<feature type="active site" description="Schiff-base intermediate with substrate" evidence="1">
    <location>
        <position position="52"/>
    </location>
</feature>
<feature type="binding site" evidence="1">
    <location>
        <position position="10"/>
    </location>
    <ligand>
        <name>Mg(2+)</name>
        <dbReference type="ChEBI" id="CHEBI:18420"/>
    </ligand>
</feature>
<feature type="binding site" evidence="1">
    <location>
        <position position="12"/>
    </location>
    <ligand>
        <name>Mg(2+)</name>
        <dbReference type="ChEBI" id="CHEBI:18420"/>
    </ligand>
</feature>
<feature type="binding site" evidence="1">
    <location>
        <position position="186"/>
    </location>
    <ligand>
        <name>Mg(2+)</name>
        <dbReference type="ChEBI" id="CHEBI:18420"/>
    </ligand>
</feature>